<keyword id="KW-0002">3D-structure</keyword>
<keyword id="KW-0025">Alternative splicing</keyword>
<keyword id="KW-0067">ATP-binding</keyword>
<keyword id="KW-0090">Biological rhythms</keyword>
<keyword id="KW-1003">Cell membrane</keyword>
<keyword id="KW-0963">Cytoplasm</keyword>
<keyword id="KW-0206">Cytoskeleton</keyword>
<keyword id="KW-0903">Direct protein sequencing</keyword>
<keyword id="KW-0333">Golgi apparatus</keyword>
<keyword id="KW-0418">Kinase</keyword>
<keyword id="KW-0472">Membrane</keyword>
<keyword id="KW-0488">Methylation</keyword>
<keyword id="KW-0547">Nucleotide-binding</keyword>
<keyword id="KW-0539">Nucleus</keyword>
<keyword id="KW-0597">Phosphoprotein</keyword>
<keyword id="KW-1185">Reference proteome</keyword>
<keyword id="KW-0723">Serine/threonine-protein kinase</keyword>
<keyword id="KW-0808">Transferase</keyword>
<keyword id="KW-0879">Wnt signaling pathway</keyword>
<accession>Q06486</accession>
<accession>Q99KK4</accession>
<reference key="1">
    <citation type="journal article" date="1993" name="J. Biol. Chem.">
        <title>Molecular cloning, expression, and characterization of a 49-kilodalton casein kinase I isoform from rat testis.</title>
        <authorList>
            <person name="Graves P.R."/>
            <person name="Haas D.W."/>
            <person name="Hagedorn C.H."/>
            <person name="Depaoli-Roach A.A."/>
            <person name="Roach P.J."/>
        </authorList>
    </citation>
    <scope>NUCLEOTIDE SEQUENCE [MRNA] (ISOFORM 2)</scope>
    <scope>PROTEIN SEQUENCE OF 1-6</scope>
    <source>
        <tissue>Testis</tissue>
    </source>
</reference>
<reference key="2">
    <citation type="submission" date="2001-06" db="EMBL/GenBank/DDBJ databases">
        <title>Casein kinase 1 delta rat.</title>
        <authorList>
            <person name="Takano A."/>
            <person name="Nagai K."/>
        </authorList>
    </citation>
    <scope>NUCLEOTIDE SEQUENCE [MRNA] (ISOFORM 1)</scope>
</reference>
<reference key="3">
    <citation type="journal article" date="1995" name="J. Biol. Chem.">
        <title>Role of COOH-terminal phosphorylation in the regulation of casein kinase I delta.</title>
        <authorList>
            <person name="Graves P.R."/>
            <person name="Roach P.J."/>
        </authorList>
    </citation>
    <scope>AUTOPHOSPHORYLATION</scope>
    <scope>AUTOINHIBITORY DOMAIN</scope>
</reference>
<reference key="4">
    <citation type="journal article" date="2001" name="FEBS Lett.">
        <title>Human casein kinase Idelta phosphorylation of human circadian clock proteins period 1 and 2.</title>
        <authorList>
            <person name="Camacho F."/>
            <person name="Cilio M."/>
            <person name="Guo Y."/>
            <person name="Virshup D.M."/>
            <person name="Patel K."/>
            <person name="Khorkova O."/>
            <person name="Styren S."/>
            <person name="Morse B."/>
            <person name="Yao Z."/>
            <person name="Keesler G.A."/>
        </authorList>
    </citation>
    <scope>TISSUE SPECIFICITY</scope>
</reference>
<reference key="5">
    <citation type="journal article" date="2005" name="Biochim. Biophys. Acta">
        <title>Interaction of casein kinase 1 delta (CK1 delta) with the light chain LC2 of microtubule associated protein 1A (MAP1A).</title>
        <authorList>
            <person name="Wolff S."/>
            <person name="Xiao Z."/>
            <person name="Wittau M."/>
            <person name="Suessner N."/>
            <person name="Stoeter M."/>
            <person name="Knippschild U."/>
        </authorList>
    </citation>
    <scope>FUNCTION AS MAP1A KINASE</scope>
    <scope>INTERACTION WITH MAP1A</scope>
    <scope>CATALYTIC ACTIVITY</scope>
</reference>
<reference key="6">
    <citation type="journal article" date="2007" name="Biochem. J.">
        <title>Phosphorylation of CK1delta: identification of Ser370 as the major phosphorylation site targeted by PKA in vitro and in vivo.</title>
        <authorList>
            <person name="Giamas G."/>
            <person name="Hirner H."/>
            <person name="Shoshiashvili L."/>
            <person name="Grothey A."/>
            <person name="Gessert S."/>
            <person name="Kuehl M."/>
            <person name="Henne-Bruns D."/>
            <person name="Vorgias C.E."/>
            <person name="Knippschild U."/>
        </authorList>
    </citation>
    <scope>PHOSPHORYLATION AT SER-370 BY PKA</scope>
</reference>
<reference key="7">
    <citation type="journal article" date="2012" name="Nat. Commun.">
        <title>Quantitative maps of protein phosphorylation sites across 14 different rat organs and tissues.</title>
        <authorList>
            <person name="Lundby A."/>
            <person name="Secher A."/>
            <person name="Lage K."/>
            <person name="Nordsborg N.B."/>
            <person name="Dmytriyev A."/>
            <person name="Lundby C."/>
            <person name="Olsen J.V."/>
        </authorList>
    </citation>
    <scope>PHOSPHORYLATION [LARGE SCALE ANALYSIS] AT SER-382</scope>
    <scope>IDENTIFICATION BY MASS SPECTROMETRY [LARGE SCALE ANALYSIS]</scope>
</reference>
<reference key="8">
    <citation type="journal article" date="1996" name="J. Mol. Biol.">
        <title>Three-dimensional structure of mammalian casein kinase I: molecular basis for phosphate recognition.</title>
        <authorList>
            <person name="Longenecker K.L."/>
            <person name="Roach P.J."/>
            <person name="Hurley T.D."/>
        </authorList>
    </citation>
    <scope>X-RAY CRYSTALLOGRAPHY (2.3 ANGSTROMS) OF 1-317</scope>
    <scope>ACTIVE SITE</scope>
</reference>
<gene>
    <name type="primary">Csnk1d</name>
    <name type="synonym">Hckid</name>
</gene>
<proteinExistence type="evidence at protein level"/>
<comment type="function">
    <text evidence="2 3 8">Essential serine/threonine-protein kinase that regulates diverse cellular growth and survival processes including Wnt signaling, DNA repair and circadian rhythms. It can phosphorylate a large number of proteins. Casein kinases are operationally defined by their preferential utilization of acidic proteins such as caseins as substrates. Phosphorylates connexin-43/GJA1, MAP1A, SNAPIN, MAPT/TAU, TOP2A, DCK, HIF1A, EIF6, p53/TP53, DVL2, DVL3, ESR1, AIB1/NCOA3, DNMT1, PKD2, YAP1, PER1 and PER2. Central component of the circadian clock. In balance with PP1, determines the circadian period length through the regulation of the speed and rhythmicity of PER1 and PER2 phosphorylation. Controls PER1 and PER2 nuclear transport and degradation. YAP1 phosphorylation promotes its SCF(beta-TRCP) E3 ubiquitin ligase-mediated ubiquitination and subsequent degradation. DNMT1 phosphorylation reduces its DNA-binding activity. Phosphorylation of ESR1 and AIB1/NCOA3 stimulates their activity and coactivation. Phosphorylation of DVL2 and DVL3 regulates WNT3A signaling pathway that controls neurite outgrowth. Phosphorylates NEDD9/HEF1 (By similarity). EIF6 phosphorylation promotes its nuclear export. Triggers down-regulation of dopamine receptors in the forebrain. Activates DCK in vitro by phosphorylation. TOP2A phosphorylation favors DNA cleavable complex formation. May regulate the formation of the mitotic spindle apparatus in extravillous trophoblast. Modulates connexin-43/GJA1 gap junction assembly by phosphorylation. Probably involved in lymphocyte physiology. Regulates fast synaptic transmission mediated by glutamate (By similarity).</text>
</comment>
<comment type="catalytic activity">
    <reaction evidence="8">
        <text>L-seryl-[protein] + ATP = O-phospho-L-seryl-[protein] + ADP + H(+)</text>
        <dbReference type="Rhea" id="RHEA:17989"/>
        <dbReference type="Rhea" id="RHEA-COMP:9863"/>
        <dbReference type="Rhea" id="RHEA-COMP:11604"/>
        <dbReference type="ChEBI" id="CHEBI:15378"/>
        <dbReference type="ChEBI" id="CHEBI:29999"/>
        <dbReference type="ChEBI" id="CHEBI:30616"/>
        <dbReference type="ChEBI" id="CHEBI:83421"/>
        <dbReference type="ChEBI" id="CHEBI:456216"/>
        <dbReference type="EC" id="2.7.11.1"/>
    </reaction>
    <physiologicalReaction direction="left-to-right" evidence="13">
        <dbReference type="Rhea" id="RHEA:17990"/>
    </physiologicalReaction>
</comment>
<comment type="catalytic activity">
    <reaction evidence="8">
        <text>L-threonyl-[protein] + ATP = O-phospho-L-threonyl-[protein] + ADP + H(+)</text>
        <dbReference type="Rhea" id="RHEA:46608"/>
        <dbReference type="Rhea" id="RHEA-COMP:11060"/>
        <dbReference type="Rhea" id="RHEA-COMP:11605"/>
        <dbReference type="ChEBI" id="CHEBI:15378"/>
        <dbReference type="ChEBI" id="CHEBI:30013"/>
        <dbReference type="ChEBI" id="CHEBI:30616"/>
        <dbReference type="ChEBI" id="CHEBI:61977"/>
        <dbReference type="ChEBI" id="CHEBI:456216"/>
        <dbReference type="EC" id="2.7.11.1"/>
    </reaction>
    <physiologicalReaction direction="left-to-right" evidence="13">
        <dbReference type="Rhea" id="RHEA:46609"/>
    </physiologicalReaction>
</comment>
<comment type="catalytic activity">
    <reaction evidence="2">
        <text>L-seryl-[tau protein] + ATP = O-phospho-L-seryl-[tau protein] + ADP + H(+)</text>
        <dbReference type="Rhea" id="RHEA:12801"/>
        <dbReference type="Rhea" id="RHEA-COMP:13701"/>
        <dbReference type="Rhea" id="RHEA-COMP:13702"/>
        <dbReference type="ChEBI" id="CHEBI:15378"/>
        <dbReference type="ChEBI" id="CHEBI:29999"/>
        <dbReference type="ChEBI" id="CHEBI:30616"/>
        <dbReference type="ChEBI" id="CHEBI:83421"/>
        <dbReference type="ChEBI" id="CHEBI:456216"/>
        <dbReference type="EC" id="2.7.11.26"/>
    </reaction>
    <physiologicalReaction direction="left-to-right" evidence="2">
        <dbReference type="Rhea" id="RHEA:12802"/>
    </physiologicalReaction>
</comment>
<comment type="catalytic activity">
    <reaction evidence="2">
        <text>L-threonyl-[tau protein] + ATP = O-phospho-L-threonyl-[tau protein] + ADP + H(+)</text>
        <dbReference type="Rhea" id="RHEA:53904"/>
        <dbReference type="Rhea" id="RHEA-COMP:13703"/>
        <dbReference type="Rhea" id="RHEA-COMP:13704"/>
        <dbReference type="ChEBI" id="CHEBI:15378"/>
        <dbReference type="ChEBI" id="CHEBI:30013"/>
        <dbReference type="ChEBI" id="CHEBI:30616"/>
        <dbReference type="ChEBI" id="CHEBI:61977"/>
        <dbReference type="ChEBI" id="CHEBI:456216"/>
        <dbReference type="EC" id="2.7.11.26"/>
    </reaction>
    <physiologicalReaction direction="left-to-right" evidence="2">
        <dbReference type="Rhea" id="RHEA:53905"/>
    </physiologicalReaction>
</comment>
<comment type="activity regulation">
    <text evidence="2">Drug-mediated inhibition leads to a delay of the oscillations with the magnitude of this effect dependent upon the timing of drug administration. Inhibited by phosphorylation (By similarity). Exhibits substrate-dependent heparin activation.</text>
</comment>
<comment type="subunit">
    <text evidence="2 3 8">Monomer (By similarity). Component of the circadian core oscillator, which includes the CRY proteins, CLOCK, or NPAS2, ARTNL/BMAL1 or ARTNL2/BMAL2, CSNK1D and/or CSNK1E, TIMELESS and the PER proteins (By similarity). Interacts with DNMT1 (By similarity). Interacts directly with PER1 and PER2 which may lead to their degradation (By similarity). Interacts with MAPT/TAU, SNAPIN, DBNDD2, AIB1/NCOA3 and ESR1 (By similarity). Interacts with AKAP9/AKAP450; this interaction promotes centrosomal subcellular location (By similarity). Binds to tubulins in mitotic cells upon DNA damage (By similarity). Interacts with GJA1 (By similarity). Interacts with MAP1A (PubMed:15961172). Interacts with DDX3X; this interaction enhances CSNK1D kinase activity in vitro, but it is unclear whether this interaction is physiologically relevant (By similarity). Interacts with FAM83A, FAM83B, FAM83E and FAM83H (via DUF1669) (By similarity).</text>
</comment>
<comment type="interaction">
    <interactant intactId="EBI-2910316">
        <id>Q06486</id>
    </interactant>
    <interactant intactId="EBI-389668">
        <id>Q00987</id>
        <label>MDM2</label>
    </interactant>
    <organismsDiffer>true</organismsDiffer>
    <experiments>2</experiments>
</comment>
<comment type="interaction">
    <interactant intactId="EBI-7088890">
        <id>Q06486-2</id>
    </interactant>
    <interactant intactId="EBI-6170320">
        <id>Q9Z266</id>
        <label>Snapin</label>
    </interactant>
    <organismsDiffer>true</organismsDiffer>
    <experiments>4</experiments>
</comment>
<comment type="subcellular location">
    <subcellularLocation>
        <location evidence="1">Cytoplasm</location>
    </subcellularLocation>
    <subcellularLocation>
        <location evidence="1">Nucleus</location>
    </subcellularLocation>
    <subcellularLocation>
        <location evidence="1">Cytoplasm</location>
        <location evidence="1">Cytoskeleton</location>
        <location evidence="1">Microtubule organizing center</location>
        <location evidence="1">Centrosome</location>
    </subcellularLocation>
    <subcellularLocation>
        <location evidence="1">Cytoplasm</location>
        <location evidence="1">Perinuclear region</location>
    </subcellularLocation>
    <subcellularLocation>
        <location evidence="1">Cell membrane</location>
    </subcellularLocation>
    <subcellularLocation>
        <location evidence="1">Cytoplasm</location>
        <location evidence="1">Cytoskeleton</location>
        <location evidence="1">Spindle</location>
    </subcellularLocation>
    <subcellularLocation>
        <location evidence="1">Golgi apparatus</location>
    </subcellularLocation>
    <text evidence="1">Localized at mitotic spindle microtubules, and at the centrosomes and interphase in interphase cells. Recruited to the spindle apparatus and the centrosomes in response to DNA-damage. Correct subcellular localization requires kinase activity (By similarity).</text>
</comment>
<comment type="alternative products">
    <event type="alternative splicing"/>
    <isoform>
        <id>Q06486-1</id>
        <name>1</name>
        <sequence type="displayed"/>
    </isoform>
    <isoform>
        <id>Q06486-2</id>
        <name>2</name>
        <sequence type="described" ref="VSP_010255"/>
    </isoform>
</comment>
<comment type="tissue specificity">
    <text evidence="7">Expressed in most tissues, including heart, brain, testis, kidney, spleen and lung.</text>
</comment>
<comment type="domain">
    <text>The autoinhibitory domain is involved in regulating enzyme activity through autophosphorylation and possibly, through heparin binding.</text>
</comment>
<comment type="PTM">
    <text evidence="9">Autophosphorylated on serine and threonine residues; this autophosphorylation represses activity. Reactivated by phosphatase-mediated dephosphorylation. May be dephosphorylated by PP1.</text>
</comment>
<comment type="similarity">
    <text evidence="12">Belongs to the protein kinase superfamily. CK1 Ser/Thr protein kinase family. Casein kinase I subfamily.</text>
</comment>
<sequence length="415" mass="47316">MELRVGNRYRLGRKIGSGSFGDIYLGTDIAAGEEVAIKLECVKTKHPQLHIESKIYKMMQGGVGIPTIRWCGAEGDYNVMVMELLGPSLEDLFNFCSRKFSLKTVLLLADQMISRIEYIHSKNFIHRDVKPDNFLMGLGKKGNLVYIIDFGLAKKYRDARTHQHIPYRENKNLTGTARYASINTHLGIEQSRRDDLESLGYVLMYFNLGSLPWQGLKAATKRQKYERISEKKMSTPIEVLCKGYPSEFATYLNFCRSLRFDDKPDYSYLRQLFRNLFHRQGFSYDYVFDWNMLKFGASRAADDAERERRDREERLRHSRNPATRGLPSTASGRLRGTQEVAPPTPLTPTSHTANTSPRPVSGMERERKVSMRLHRGAPVNVSSSDLTGRQDTSRMSTSQIPGRVASSGLQSVVHR</sequence>
<name>KC1D_RAT</name>
<organism>
    <name type="scientific">Rattus norvegicus</name>
    <name type="common">Rat</name>
    <dbReference type="NCBI Taxonomy" id="10116"/>
    <lineage>
        <taxon>Eukaryota</taxon>
        <taxon>Metazoa</taxon>
        <taxon>Chordata</taxon>
        <taxon>Craniata</taxon>
        <taxon>Vertebrata</taxon>
        <taxon>Euteleostomi</taxon>
        <taxon>Mammalia</taxon>
        <taxon>Eutheria</taxon>
        <taxon>Euarchontoglires</taxon>
        <taxon>Glires</taxon>
        <taxon>Rodentia</taxon>
        <taxon>Myomorpha</taxon>
        <taxon>Muroidea</taxon>
        <taxon>Muridae</taxon>
        <taxon>Murinae</taxon>
        <taxon>Rattus</taxon>
    </lineage>
</organism>
<dbReference type="EC" id="2.7.11.1" evidence="8"/>
<dbReference type="EC" id="2.7.11.26" evidence="2"/>
<dbReference type="EMBL" id="L07578">
    <property type="protein sequence ID" value="AAA40934.1"/>
    <property type="molecule type" value="mRNA"/>
</dbReference>
<dbReference type="EMBL" id="AB063114">
    <property type="protein sequence ID" value="BAB60852.1"/>
    <property type="molecule type" value="mRNA"/>
</dbReference>
<dbReference type="PIR" id="A46002">
    <property type="entry name" value="A46002"/>
</dbReference>
<dbReference type="RefSeq" id="NP_620691.2">
    <molecule id="Q06486-1"/>
    <property type="nucleotide sequence ID" value="NM_139060.3"/>
</dbReference>
<dbReference type="RefSeq" id="XP_063125887.1">
    <molecule id="Q06486-2"/>
    <property type="nucleotide sequence ID" value="XM_063269817.1"/>
</dbReference>
<dbReference type="PDB" id="1CKI">
    <property type="method" value="X-ray"/>
    <property type="resolution" value="2.30 A"/>
    <property type="chains" value="A/B=1-317"/>
</dbReference>
<dbReference type="PDB" id="1CKJ">
    <property type="method" value="X-ray"/>
    <property type="resolution" value="2.46 A"/>
    <property type="chains" value="A/B=1-317"/>
</dbReference>
<dbReference type="PDBsum" id="1CKI"/>
<dbReference type="PDBsum" id="1CKJ"/>
<dbReference type="SMR" id="Q06486"/>
<dbReference type="BioGRID" id="249077">
    <property type="interactions" value="14"/>
</dbReference>
<dbReference type="FunCoup" id="Q06486">
    <property type="interactions" value="4713"/>
</dbReference>
<dbReference type="IntAct" id="Q06486">
    <property type="interactions" value="12"/>
</dbReference>
<dbReference type="MINT" id="Q06486"/>
<dbReference type="STRING" id="10116.ENSRNOP00000015178"/>
<dbReference type="BindingDB" id="Q06486"/>
<dbReference type="ChEMBL" id="CHEMBL4484"/>
<dbReference type="iPTMnet" id="Q06486"/>
<dbReference type="PhosphoSitePlus" id="Q06486"/>
<dbReference type="jPOST" id="Q06486"/>
<dbReference type="PaxDb" id="10116-ENSRNOP00000015178"/>
<dbReference type="Ensembl" id="ENSRNOT00000015178.8">
    <molecule id="Q06486-2"/>
    <property type="protein sequence ID" value="ENSRNOP00000015178.5"/>
    <property type="gene ID" value="ENSRNOG00000036676.6"/>
</dbReference>
<dbReference type="GeneID" id="64462"/>
<dbReference type="KEGG" id="rno:64462"/>
<dbReference type="AGR" id="RGD:71031"/>
<dbReference type="CTD" id="1453"/>
<dbReference type="RGD" id="71031">
    <property type="gene designation" value="Csnk1d"/>
</dbReference>
<dbReference type="VEuPathDB" id="HostDB:ENSRNOG00000036676"/>
<dbReference type="eggNOG" id="KOG1164">
    <property type="taxonomic scope" value="Eukaryota"/>
</dbReference>
<dbReference type="GeneTree" id="ENSGT00940000153536"/>
<dbReference type="HOGENOM" id="CLU_019279_2_2_1"/>
<dbReference type="InParanoid" id="Q06486"/>
<dbReference type="OMA" id="IFDWTFL"/>
<dbReference type="PhylomeDB" id="Q06486"/>
<dbReference type="BRENDA" id="2.7.11.1">
    <property type="organism ID" value="5301"/>
</dbReference>
<dbReference type="Reactome" id="R-RNO-204005">
    <property type="pathway name" value="COPII-mediated vesicle transport"/>
</dbReference>
<dbReference type="Reactome" id="R-RNO-2565942">
    <property type="pathway name" value="Regulation of PLK1 Activity at G2/M Transition"/>
</dbReference>
<dbReference type="Reactome" id="R-RNO-380259">
    <property type="pathway name" value="Loss of Nlp from mitotic centrosomes"/>
</dbReference>
<dbReference type="Reactome" id="R-RNO-380270">
    <property type="pathway name" value="Recruitment of mitotic centrosome proteins and complexes"/>
</dbReference>
<dbReference type="Reactome" id="R-RNO-380284">
    <property type="pathway name" value="Loss of proteins required for interphase microtubule organization from the centrosome"/>
</dbReference>
<dbReference type="Reactome" id="R-RNO-380320">
    <property type="pathway name" value="Recruitment of NuMA to mitotic centrosomes"/>
</dbReference>
<dbReference type="Reactome" id="R-RNO-5620912">
    <property type="pathway name" value="Anchoring of the basal body to the plasma membrane"/>
</dbReference>
<dbReference type="Reactome" id="R-RNO-6791226">
    <property type="pathway name" value="Major pathway of rRNA processing in the nucleolus and cytosol"/>
</dbReference>
<dbReference type="Reactome" id="R-RNO-8854518">
    <property type="pathway name" value="AURKA Activation by TPX2"/>
</dbReference>
<dbReference type="EvolutionaryTrace" id="Q06486"/>
<dbReference type="PRO" id="PR:Q06486"/>
<dbReference type="Proteomes" id="UP000002494">
    <property type="component" value="Chromosome 10"/>
</dbReference>
<dbReference type="Bgee" id="ENSRNOG00000036676">
    <property type="expression patterns" value="Expressed in testis and 19 other cell types or tissues"/>
</dbReference>
<dbReference type="GO" id="GO:0005813">
    <property type="term" value="C:centrosome"/>
    <property type="evidence" value="ECO:0000314"/>
    <property type="project" value="RGD"/>
</dbReference>
<dbReference type="GO" id="GO:0036064">
    <property type="term" value="C:ciliary basal body"/>
    <property type="evidence" value="ECO:0000266"/>
    <property type="project" value="RGD"/>
</dbReference>
<dbReference type="GO" id="GO:0005737">
    <property type="term" value="C:cytoplasm"/>
    <property type="evidence" value="ECO:0000318"/>
    <property type="project" value="GO_Central"/>
</dbReference>
<dbReference type="GO" id="GO:0005794">
    <property type="term" value="C:Golgi apparatus"/>
    <property type="evidence" value="ECO:0000266"/>
    <property type="project" value="RGD"/>
</dbReference>
<dbReference type="GO" id="GO:0005634">
    <property type="term" value="C:nucleus"/>
    <property type="evidence" value="ECO:0000250"/>
    <property type="project" value="UniProtKB"/>
</dbReference>
<dbReference type="GO" id="GO:0048471">
    <property type="term" value="C:perinuclear region of cytoplasm"/>
    <property type="evidence" value="ECO:0000314"/>
    <property type="project" value="RGD"/>
</dbReference>
<dbReference type="GO" id="GO:0005886">
    <property type="term" value="C:plasma membrane"/>
    <property type="evidence" value="ECO:0000266"/>
    <property type="project" value="RGD"/>
</dbReference>
<dbReference type="GO" id="GO:0005819">
    <property type="term" value="C:spindle"/>
    <property type="evidence" value="ECO:0000266"/>
    <property type="project" value="RGD"/>
</dbReference>
<dbReference type="GO" id="GO:0005876">
    <property type="term" value="C:spindle microtubule"/>
    <property type="evidence" value="ECO:0000266"/>
    <property type="project" value="RGD"/>
</dbReference>
<dbReference type="GO" id="GO:0005524">
    <property type="term" value="F:ATP binding"/>
    <property type="evidence" value="ECO:0007669"/>
    <property type="project" value="UniProtKB-KW"/>
</dbReference>
<dbReference type="GO" id="GO:0016301">
    <property type="term" value="F:kinase activity"/>
    <property type="evidence" value="ECO:0000314"/>
    <property type="project" value="RGD"/>
</dbReference>
<dbReference type="GO" id="GO:0004672">
    <property type="term" value="F:protein kinase activity"/>
    <property type="evidence" value="ECO:0000250"/>
    <property type="project" value="UniProtKB"/>
</dbReference>
<dbReference type="GO" id="GO:0106310">
    <property type="term" value="F:protein serine kinase activity"/>
    <property type="evidence" value="ECO:0000266"/>
    <property type="project" value="RGD"/>
</dbReference>
<dbReference type="GO" id="GO:0004674">
    <property type="term" value="F:protein serine/threonine kinase activity"/>
    <property type="evidence" value="ECO:0000314"/>
    <property type="project" value="UniProtKB"/>
</dbReference>
<dbReference type="GO" id="GO:1990090">
    <property type="term" value="P:cellular response to nerve growth factor stimulus"/>
    <property type="evidence" value="ECO:0000270"/>
    <property type="project" value="RGD"/>
</dbReference>
<dbReference type="GO" id="GO:0032922">
    <property type="term" value="P:circadian regulation of gene expression"/>
    <property type="evidence" value="ECO:0000250"/>
    <property type="project" value="UniProtKB"/>
</dbReference>
<dbReference type="GO" id="GO:0006897">
    <property type="term" value="P:endocytosis"/>
    <property type="evidence" value="ECO:0000318"/>
    <property type="project" value="GO_Central"/>
</dbReference>
<dbReference type="GO" id="GO:0007030">
    <property type="term" value="P:Golgi organization"/>
    <property type="evidence" value="ECO:0000266"/>
    <property type="project" value="RGD"/>
</dbReference>
<dbReference type="GO" id="GO:0007020">
    <property type="term" value="P:microtubule nucleation"/>
    <property type="evidence" value="ECO:0000266"/>
    <property type="project" value="RGD"/>
</dbReference>
<dbReference type="GO" id="GO:1904948">
    <property type="term" value="P:midbrain dopaminergic neuron differentiation"/>
    <property type="evidence" value="ECO:0000266"/>
    <property type="project" value="RGD"/>
</dbReference>
<dbReference type="GO" id="GO:1905515">
    <property type="term" value="P:non-motile cilium assembly"/>
    <property type="evidence" value="ECO:0000266"/>
    <property type="project" value="RGD"/>
</dbReference>
<dbReference type="GO" id="GO:0090263">
    <property type="term" value="P:positive regulation of canonical Wnt signaling pathway"/>
    <property type="evidence" value="ECO:0000266"/>
    <property type="project" value="RGD"/>
</dbReference>
<dbReference type="GO" id="GO:2000052">
    <property type="term" value="P:positive regulation of non-canonical Wnt signaling pathway"/>
    <property type="evidence" value="ECO:0000266"/>
    <property type="project" value="RGD"/>
</dbReference>
<dbReference type="GO" id="GO:0032436">
    <property type="term" value="P:positive regulation of proteasomal ubiquitin-dependent protein catabolic process"/>
    <property type="evidence" value="ECO:0000250"/>
    <property type="project" value="UniProtKB"/>
</dbReference>
<dbReference type="GO" id="GO:0030177">
    <property type="term" value="P:positive regulation of Wnt signaling pathway"/>
    <property type="evidence" value="ECO:0000266"/>
    <property type="project" value="RGD"/>
</dbReference>
<dbReference type="GO" id="GO:0071539">
    <property type="term" value="P:protein localization to centrosome"/>
    <property type="evidence" value="ECO:0000266"/>
    <property type="project" value="RGD"/>
</dbReference>
<dbReference type="GO" id="GO:0061512">
    <property type="term" value="P:protein localization to cilium"/>
    <property type="evidence" value="ECO:0000266"/>
    <property type="project" value="RGD"/>
</dbReference>
<dbReference type="GO" id="GO:0034067">
    <property type="term" value="P:protein localization to Golgi apparatus"/>
    <property type="evidence" value="ECO:0000266"/>
    <property type="project" value="RGD"/>
</dbReference>
<dbReference type="GO" id="GO:0006468">
    <property type="term" value="P:protein phosphorylation"/>
    <property type="evidence" value="ECO:0000250"/>
    <property type="project" value="UniProtKB"/>
</dbReference>
<dbReference type="GO" id="GO:0042752">
    <property type="term" value="P:regulation of circadian rhythm"/>
    <property type="evidence" value="ECO:0000250"/>
    <property type="project" value="UniProtKB"/>
</dbReference>
<dbReference type="GO" id="GO:0007165">
    <property type="term" value="P:signal transduction"/>
    <property type="evidence" value="ECO:0000318"/>
    <property type="project" value="GO_Central"/>
</dbReference>
<dbReference type="GO" id="GO:0051225">
    <property type="term" value="P:spindle assembly"/>
    <property type="evidence" value="ECO:0000266"/>
    <property type="project" value="RGD"/>
</dbReference>
<dbReference type="GO" id="GO:0016055">
    <property type="term" value="P:Wnt signaling pathway"/>
    <property type="evidence" value="ECO:0007669"/>
    <property type="project" value="UniProtKB-KW"/>
</dbReference>
<dbReference type="CDD" id="cd14125">
    <property type="entry name" value="STKc_CK1_delta_epsilon"/>
    <property type="match status" value="1"/>
</dbReference>
<dbReference type="DisProt" id="DP03052"/>
<dbReference type="FunFam" id="1.10.510.10:FF:000194">
    <property type="entry name" value="Casein kinase I isoform delta"/>
    <property type="match status" value="1"/>
</dbReference>
<dbReference type="FunFam" id="3.30.200.20:FF:000538">
    <property type="entry name" value="Putative Casein kinase I"/>
    <property type="match status" value="1"/>
</dbReference>
<dbReference type="Gene3D" id="1.10.510.10">
    <property type="entry name" value="Transferase(Phosphotransferase) domain 1"/>
    <property type="match status" value="1"/>
</dbReference>
<dbReference type="InterPro" id="IPR050235">
    <property type="entry name" value="CK1_Ser-Thr_kinase"/>
</dbReference>
<dbReference type="InterPro" id="IPR011009">
    <property type="entry name" value="Kinase-like_dom_sf"/>
</dbReference>
<dbReference type="InterPro" id="IPR000719">
    <property type="entry name" value="Prot_kinase_dom"/>
</dbReference>
<dbReference type="InterPro" id="IPR017441">
    <property type="entry name" value="Protein_kinase_ATP_BS"/>
</dbReference>
<dbReference type="InterPro" id="IPR008271">
    <property type="entry name" value="Ser/Thr_kinase_AS"/>
</dbReference>
<dbReference type="PANTHER" id="PTHR11909">
    <property type="entry name" value="CASEIN KINASE-RELATED"/>
    <property type="match status" value="1"/>
</dbReference>
<dbReference type="Pfam" id="PF00069">
    <property type="entry name" value="Pkinase"/>
    <property type="match status" value="1"/>
</dbReference>
<dbReference type="SMART" id="SM00220">
    <property type="entry name" value="S_TKc"/>
    <property type="match status" value="1"/>
</dbReference>
<dbReference type="SUPFAM" id="SSF56112">
    <property type="entry name" value="Protein kinase-like (PK-like)"/>
    <property type="match status" value="1"/>
</dbReference>
<dbReference type="PROSITE" id="PS00107">
    <property type="entry name" value="PROTEIN_KINASE_ATP"/>
    <property type="match status" value="1"/>
</dbReference>
<dbReference type="PROSITE" id="PS50011">
    <property type="entry name" value="PROTEIN_KINASE_DOM"/>
    <property type="match status" value="1"/>
</dbReference>
<dbReference type="PROSITE" id="PS00108">
    <property type="entry name" value="PROTEIN_KINASE_ST"/>
    <property type="match status" value="1"/>
</dbReference>
<protein>
    <recommendedName>
        <fullName>Casein kinase I isoform delta</fullName>
        <shortName>CKI-delta</shortName>
        <ecNumber evidence="8">2.7.11.1</ecNumber>
    </recommendedName>
    <alternativeName>
        <fullName>Tau-protein kinase CSNK1D</fullName>
        <ecNumber evidence="2">2.7.11.26</ecNumber>
    </alternativeName>
</protein>
<feature type="chain" id="PRO_0000192836" description="Casein kinase I isoform delta">
    <location>
        <begin position="1"/>
        <end position="415"/>
    </location>
</feature>
<feature type="domain" description="Protein kinase" evidence="4">
    <location>
        <begin position="9"/>
        <end position="277"/>
    </location>
</feature>
<feature type="region of interest" description="Centrosomal localization signal (CLS)" evidence="1">
    <location>
        <begin position="278"/>
        <end position="364"/>
    </location>
</feature>
<feature type="region of interest" description="Disordered" evidence="6">
    <location>
        <begin position="301"/>
        <end position="415"/>
    </location>
</feature>
<feature type="region of interest" description="Autoinhibitory">
    <location>
        <begin position="317"/>
        <end position="342"/>
    </location>
</feature>
<feature type="compositionally biased region" description="Basic and acidic residues" evidence="6">
    <location>
        <begin position="301"/>
        <end position="315"/>
    </location>
</feature>
<feature type="compositionally biased region" description="Polar residues" evidence="6">
    <location>
        <begin position="347"/>
        <end position="358"/>
    </location>
</feature>
<feature type="compositionally biased region" description="Polar residues" evidence="6">
    <location>
        <begin position="380"/>
        <end position="400"/>
    </location>
</feature>
<feature type="active site" description="Proton acceptor" evidence="4 5 10">
    <location>
        <position position="128"/>
    </location>
</feature>
<feature type="binding site" evidence="4">
    <location>
        <begin position="15"/>
        <end position="23"/>
    </location>
    <ligand>
        <name>ATP</name>
        <dbReference type="ChEBI" id="CHEBI:30616"/>
    </ligand>
</feature>
<feature type="binding site" evidence="4">
    <location>
        <position position="38"/>
    </location>
    <ligand>
        <name>ATP</name>
        <dbReference type="ChEBI" id="CHEBI:30616"/>
    </ligand>
</feature>
<feature type="modified residue" description="Phosphoserine" evidence="2">
    <location>
        <position position="328"/>
    </location>
</feature>
<feature type="modified residue" description="Phosphoserine" evidence="2">
    <location>
        <position position="331"/>
    </location>
</feature>
<feature type="modified residue" description="Phosphoserine; by PKA" evidence="9">
    <location>
        <position position="370"/>
    </location>
</feature>
<feature type="modified residue" description="Omega-N-methylarginine" evidence="3">
    <location>
        <position position="375"/>
    </location>
</feature>
<feature type="modified residue" description="Phosphoserine" evidence="14">
    <location>
        <position position="382"/>
    </location>
</feature>
<feature type="modified residue" description="Phosphoserine" evidence="2">
    <location>
        <position position="383"/>
    </location>
</feature>
<feature type="modified residue" description="Phosphoserine" evidence="2">
    <location>
        <position position="384"/>
    </location>
</feature>
<feature type="modified residue" description="Phosphoserine" evidence="2">
    <location>
        <position position="407"/>
    </location>
</feature>
<feature type="modified residue" description="Phosphoserine" evidence="2">
    <location>
        <position position="411"/>
    </location>
</feature>
<feature type="splice variant" id="VSP_010255" description="In isoform 2." evidence="11">
    <original>IPGRVASSGLQSVVHR</original>
    <variation>RSRDMASLRLHAARQGARCRPQRPRRTTY</variation>
    <location>
        <begin position="400"/>
        <end position="415"/>
    </location>
</feature>
<feature type="turn" evidence="15">
    <location>
        <begin position="6"/>
        <end position="8"/>
    </location>
</feature>
<feature type="strand" evidence="15">
    <location>
        <begin position="9"/>
        <end position="17"/>
    </location>
</feature>
<feature type="strand" evidence="15">
    <location>
        <begin position="19"/>
        <end position="28"/>
    </location>
</feature>
<feature type="turn" evidence="15">
    <location>
        <begin position="29"/>
        <end position="31"/>
    </location>
</feature>
<feature type="strand" evidence="15">
    <location>
        <begin position="34"/>
        <end position="42"/>
    </location>
</feature>
<feature type="helix" evidence="15">
    <location>
        <begin position="49"/>
        <end position="58"/>
    </location>
</feature>
<feature type="strand" evidence="15">
    <location>
        <begin position="68"/>
        <end position="74"/>
    </location>
</feature>
<feature type="strand" evidence="15">
    <location>
        <begin position="77"/>
        <end position="83"/>
    </location>
</feature>
<feature type="helix" evidence="15">
    <location>
        <begin position="89"/>
        <end position="95"/>
    </location>
</feature>
<feature type="turn" evidence="15">
    <location>
        <begin position="96"/>
        <end position="98"/>
    </location>
</feature>
<feature type="helix" evidence="15">
    <location>
        <begin position="102"/>
        <end position="121"/>
    </location>
</feature>
<feature type="helix" evidence="15">
    <location>
        <begin position="131"/>
        <end position="133"/>
    </location>
</feature>
<feature type="strand" evidence="15">
    <location>
        <begin position="134"/>
        <end position="136"/>
    </location>
</feature>
<feature type="helix" evidence="15">
    <location>
        <begin position="139"/>
        <end position="141"/>
    </location>
</feature>
<feature type="strand" evidence="15">
    <location>
        <begin position="145"/>
        <end position="147"/>
    </location>
</feature>
<feature type="turn" evidence="15">
    <location>
        <begin position="159"/>
        <end position="161"/>
    </location>
</feature>
<feature type="strand" evidence="15">
    <location>
        <begin position="177"/>
        <end position="179"/>
    </location>
</feature>
<feature type="helix" evidence="15">
    <location>
        <begin position="182"/>
        <end position="185"/>
    </location>
</feature>
<feature type="helix" evidence="15">
    <location>
        <begin position="192"/>
        <end position="208"/>
    </location>
</feature>
<feature type="strand" evidence="16">
    <location>
        <begin position="220"/>
        <end position="222"/>
    </location>
</feature>
<feature type="helix" evidence="15">
    <location>
        <begin position="225"/>
        <end position="234"/>
    </location>
</feature>
<feature type="helix" evidence="15">
    <location>
        <begin position="237"/>
        <end position="240"/>
    </location>
</feature>
<feature type="turn" evidence="15">
    <location>
        <begin position="241"/>
        <end position="243"/>
    </location>
</feature>
<feature type="helix" evidence="15">
    <location>
        <begin position="246"/>
        <end position="257"/>
    </location>
</feature>
<feature type="helix" evidence="15">
    <location>
        <begin position="266"/>
        <end position="279"/>
    </location>
</feature>
<feature type="helix" evidence="15">
    <location>
        <begin position="289"/>
        <end position="292"/>
    </location>
</feature>
<feature type="helix" evidence="15">
    <location>
        <begin position="293"/>
        <end position="295"/>
    </location>
</feature>
<evidence type="ECO:0000250" key="1"/>
<evidence type="ECO:0000250" key="2">
    <source>
        <dbReference type="UniProtKB" id="P48730"/>
    </source>
</evidence>
<evidence type="ECO:0000250" key="3">
    <source>
        <dbReference type="UniProtKB" id="Q9DC28"/>
    </source>
</evidence>
<evidence type="ECO:0000255" key="4">
    <source>
        <dbReference type="PROSITE-ProRule" id="PRU00159"/>
    </source>
</evidence>
<evidence type="ECO:0000255" key="5">
    <source>
        <dbReference type="PROSITE-ProRule" id="PRU10027"/>
    </source>
</evidence>
<evidence type="ECO:0000256" key="6">
    <source>
        <dbReference type="SAM" id="MobiDB-lite"/>
    </source>
</evidence>
<evidence type="ECO:0000269" key="7">
    <source>
    </source>
</evidence>
<evidence type="ECO:0000269" key="8">
    <source>
    </source>
</evidence>
<evidence type="ECO:0000269" key="9">
    <source>
    </source>
</evidence>
<evidence type="ECO:0000269" key="10">
    <source>
    </source>
</evidence>
<evidence type="ECO:0000303" key="11">
    <source>
    </source>
</evidence>
<evidence type="ECO:0000305" key="12"/>
<evidence type="ECO:0000305" key="13">
    <source>
    </source>
</evidence>
<evidence type="ECO:0007744" key="14">
    <source>
    </source>
</evidence>
<evidence type="ECO:0007829" key="15">
    <source>
        <dbReference type="PDB" id="1CKI"/>
    </source>
</evidence>
<evidence type="ECO:0007829" key="16">
    <source>
        <dbReference type="PDB" id="1CKJ"/>
    </source>
</evidence>